<organism>
    <name type="scientific">Xylella fastidiosa (strain M23)</name>
    <dbReference type="NCBI Taxonomy" id="405441"/>
    <lineage>
        <taxon>Bacteria</taxon>
        <taxon>Pseudomonadati</taxon>
        <taxon>Pseudomonadota</taxon>
        <taxon>Gammaproteobacteria</taxon>
        <taxon>Lysobacterales</taxon>
        <taxon>Lysobacteraceae</taxon>
        <taxon>Xylella</taxon>
    </lineage>
</organism>
<feature type="chain" id="PRO_1000144821" description="Hydroxyacylglutathione hydrolase">
    <location>
        <begin position="1"/>
        <end position="258"/>
    </location>
</feature>
<feature type="binding site" evidence="1">
    <location>
        <position position="52"/>
    </location>
    <ligand>
        <name>Zn(2+)</name>
        <dbReference type="ChEBI" id="CHEBI:29105"/>
        <label>1</label>
    </ligand>
</feature>
<feature type="binding site" evidence="1">
    <location>
        <position position="54"/>
    </location>
    <ligand>
        <name>Zn(2+)</name>
        <dbReference type="ChEBI" id="CHEBI:29105"/>
        <label>1</label>
    </ligand>
</feature>
<feature type="binding site" evidence="1">
    <location>
        <position position="56"/>
    </location>
    <ligand>
        <name>Zn(2+)</name>
        <dbReference type="ChEBI" id="CHEBI:29105"/>
        <label>2</label>
    </ligand>
</feature>
<feature type="binding site" evidence="1">
    <location>
        <position position="57"/>
    </location>
    <ligand>
        <name>Zn(2+)</name>
        <dbReference type="ChEBI" id="CHEBI:29105"/>
        <label>2</label>
    </ligand>
</feature>
<feature type="binding site" evidence="1">
    <location>
        <position position="109"/>
    </location>
    <ligand>
        <name>Zn(2+)</name>
        <dbReference type="ChEBI" id="CHEBI:29105"/>
        <label>1</label>
    </ligand>
</feature>
<feature type="binding site" evidence="1">
    <location>
        <position position="126"/>
    </location>
    <ligand>
        <name>Zn(2+)</name>
        <dbReference type="ChEBI" id="CHEBI:29105"/>
        <label>1</label>
    </ligand>
</feature>
<feature type="binding site" evidence="1">
    <location>
        <position position="126"/>
    </location>
    <ligand>
        <name>Zn(2+)</name>
        <dbReference type="ChEBI" id="CHEBI:29105"/>
        <label>2</label>
    </ligand>
</feature>
<feature type="binding site" evidence="1">
    <location>
        <position position="164"/>
    </location>
    <ligand>
        <name>Zn(2+)</name>
        <dbReference type="ChEBI" id="CHEBI:29105"/>
        <label>2</label>
    </ligand>
</feature>
<name>GLO2_XYLF2</name>
<proteinExistence type="inferred from homology"/>
<comment type="function">
    <text evidence="1">Thiolesterase that catalyzes the hydrolysis of S-D-lactoyl-glutathione to form glutathione and D-lactic acid.</text>
</comment>
<comment type="catalytic activity">
    <reaction evidence="1">
        <text>an S-(2-hydroxyacyl)glutathione + H2O = a 2-hydroxy carboxylate + glutathione + H(+)</text>
        <dbReference type="Rhea" id="RHEA:21864"/>
        <dbReference type="ChEBI" id="CHEBI:15377"/>
        <dbReference type="ChEBI" id="CHEBI:15378"/>
        <dbReference type="ChEBI" id="CHEBI:57925"/>
        <dbReference type="ChEBI" id="CHEBI:58896"/>
        <dbReference type="ChEBI" id="CHEBI:71261"/>
        <dbReference type="EC" id="3.1.2.6"/>
    </reaction>
</comment>
<comment type="cofactor">
    <cofactor evidence="1">
        <name>Zn(2+)</name>
        <dbReference type="ChEBI" id="CHEBI:29105"/>
    </cofactor>
    <text evidence="1">Binds 2 Zn(2+) ions per subunit.</text>
</comment>
<comment type="pathway">
    <text evidence="1">Secondary metabolite metabolism; methylglyoxal degradation; (R)-lactate from methylglyoxal: step 2/2.</text>
</comment>
<comment type="subunit">
    <text evidence="1">Monomer.</text>
</comment>
<comment type="similarity">
    <text evidence="1">Belongs to the metallo-beta-lactamase superfamily. Glyoxalase II family.</text>
</comment>
<protein>
    <recommendedName>
        <fullName evidence="1">Hydroxyacylglutathione hydrolase</fullName>
        <ecNumber evidence="1">3.1.2.6</ecNumber>
    </recommendedName>
    <alternativeName>
        <fullName evidence="1">Glyoxalase II</fullName>
        <shortName evidence="1">Glx II</shortName>
    </alternativeName>
</protein>
<evidence type="ECO:0000255" key="1">
    <source>
        <dbReference type="HAMAP-Rule" id="MF_01374"/>
    </source>
</evidence>
<gene>
    <name evidence="1" type="primary">gloB</name>
    <name type="ordered locus">XfasM23_1299</name>
</gene>
<accession>B2I5S5</accession>
<reference key="1">
    <citation type="journal article" date="2010" name="J. Bacteriol.">
        <title>Whole genome sequences of two Xylella fastidiosa strains (M12 and M23) causing almond leaf scorch disease in California.</title>
        <authorList>
            <person name="Chen J."/>
            <person name="Xie G."/>
            <person name="Han S."/>
            <person name="Chertkov O."/>
            <person name="Sims D."/>
            <person name="Civerolo E.L."/>
        </authorList>
    </citation>
    <scope>NUCLEOTIDE SEQUENCE [LARGE SCALE GENOMIC DNA]</scope>
    <source>
        <strain>M23</strain>
    </source>
</reference>
<dbReference type="EC" id="3.1.2.6" evidence="1"/>
<dbReference type="EMBL" id="CP001011">
    <property type="protein sequence ID" value="ACB92720.1"/>
    <property type="molecule type" value="Genomic_DNA"/>
</dbReference>
<dbReference type="RefSeq" id="WP_011098005.1">
    <property type="nucleotide sequence ID" value="NC_010577.1"/>
</dbReference>
<dbReference type="SMR" id="B2I5S5"/>
<dbReference type="GeneID" id="93905020"/>
<dbReference type="KEGG" id="xfn:XfasM23_1299"/>
<dbReference type="HOGENOM" id="CLU_030571_4_1_6"/>
<dbReference type="UniPathway" id="UPA00619">
    <property type="reaction ID" value="UER00676"/>
</dbReference>
<dbReference type="Proteomes" id="UP000001698">
    <property type="component" value="Chromosome"/>
</dbReference>
<dbReference type="GO" id="GO:0004416">
    <property type="term" value="F:hydroxyacylglutathione hydrolase activity"/>
    <property type="evidence" value="ECO:0007669"/>
    <property type="project" value="UniProtKB-UniRule"/>
</dbReference>
<dbReference type="GO" id="GO:0046872">
    <property type="term" value="F:metal ion binding"/>
    <property type="evidence" value="ECO:0007669"/>
    <property type="project" value="UniProtKB-KW"/>
</dbReference>
<dbReference type="GO" id="GO:0019243">
    <property type="term" value="P:methylglyoxal catabolic process to D-lactate via S-lactoyl-glutathione"/>
    <property type="evidence" value="ECO:0007669"/>
    <property type="project" value="InterPro"/>
</dbReference>
<dbReference type="CDD" id="cd07723">
    <property type="entry name" value="hydroxyacylglutathione_hydrolase_MBL-fold"/>
    <property type="match status" value="1"/>
</dbReference>
<dbReference type="Gene3D" id="3.60.15.10">
    <property type="entry name" value="Ribonuclease Z/Hydroxyacylglutathione hydrolase-like"/>
    <property type="match status" value="1"/>
</dbReference>
<dbReference type="HAMAP" id="MF_01374">
    <property type="entry name" value="Glyoxalase_2"/>
    <property type="match status" value="1"/>
</dbReference>
<dbReference type="InterPro" id="IPR035680">
    <property type="entry name" value="Clx_II_MBL"/>
</dbReference>
<dbReference type="InterPro" id="IPR050110">
    <property type="entry name" value="Glyoxalase_II_hydrolase"/>
</dbReference>
<dbReference type="InterPro" id="IPR032282">
    <property type="entry name" value="HAGH_C"/>
</dbReference>
<dbReference type="InterPro" id="IPR017782">
    <property type="entry name" value="Hydroxyacylglutathione_Hdrlase"/>
</dbReference>
<dbReference type="InterPro" id="IPR001279">
    <property type="entry name" value="Metallo-B-lactamas"/>
</dbReference>
<dbReference type="InterPro" id="IPR036866">
    <property type="entry name" value="RibonucZ/Hydroxyglut_hydro"/>
</dbReference>
<dbReference type="NCBIfam" id="TIGR03413">
    <property type="entry name" value="GSH_gloB"/>
    <property type="match status" value="1"/>
</dbReference>
<dbReference type="PANTHER" id="PTHR43705">
    <property type="entry name" value="HYDROXYACYLGLUTATHIONE HYDROLASE"/>
    <property type="match status" value="1"/>
</dbReference>
<dbReference type="PANTHER" id="PTHR43705:SF1">
    <property type="entry name" value="HYDROXYACYLGLUTATHIONE HYDROLASE GLOB"/>
    <property type="match status" value="1"/>
</dbReference>
<dbReference type="Pfam" id="PF16123">
    <property type="entry name" value="HAGH_C"/>
    <property type="match status" value="1"/>
</dbReference>
<dbReference type="Pfam" id="PF00753">
    <property type="entry name" value="Lactamase_B"/>
    <property type="match status" value="1"/>
</dbReference>
<dbReference type="PIRSF" id="PIRSF005457">
    <property type="entry name" value="Glx"/>
    <property type="match status" value="1"/>
</dbReference>
<dbReference type="SMART" id="SM00849">
    <property type="entry name" value="Lactamase_B"/>
    <property type="match status" value="1"/>
</dbReference>
<dbReference type="SUPFAM" id="SSF56281">
    <property type="entry name" value="Metallo-hydrolase/oxidoreductase"/>
    <property type="match status" value="1"/>
</dbReference>
<sequence>MRLTPLPAFDNNYIWTLIAPDGRAIIVDPGQALPILEAHSKGLIPTAILLTHHHADHIGGVPELLERWPTLPVYAPHDTRIALNYHRIGEGDSLNILGMRFQVIHTPGHTHSHLTFIGNDLLFCGDTLFSLGCGQIFEGTPTQMLASLQRLAALPIQTRVCCGHEYTLSNAAFALHVDPTNTALQKRRQQANAMRLAGLPTLPISLESELNTNPFLRTAAPTIHAATATHLQRTPIDEVEVFATLRHWKNNFPIKNIP</sequence>
<keyword id="KW-0378">Hydrolase</keyword>
<keyword id="KW-0479">Metal-binding</keyword>
<keyword id="KW-0862">Zinc</keyword>